<feature type="chain" id="PRO_0000050469" description="Probable inorganic phosphate transporter 1-2">
    <location>
        <begin position="1"/>
        <end position="524"/>
    </location>
</feature>
<feature type="topological domain" description="Cytoplasmic" evidence="2">
    <location>
        <begin position="1"/>
        <end position="24"/>
    </location>
</feature>
<feature type="transmembrane region" description="Helical" evidence="2">
    <location>
        <begin position="25"/>
        <end position="45"/>
    </location>
</feature>
<feature type="topological domain" description="Extracellular" evidence="2">
    <location>
        <begin position="46"/>
        <end position="70"/>
    </location>
</feature>
<feature type="transmembrane region" description="Helical" evidence="2">
    <location>
        <begin position="71"/>
        <end position="91"/>
    </location>
</feature>
<feature type="topological domain" description="Cytoplasmic" evidence="2">
    <location>
        <begin position="92"/>
        <end position="99"/>
    </location>
</feature>
<feature type="transmembrane region" description="Helical" evidence="2">
    <location>
        <begin position="100"/>
        <end position="120"/>
    </location>
</feature>
<feature type="topological domain" description="Extracellular" evidence="2">
    <location>
        <begin position="121"/>
        <end position="131"/>
    </location>
</feature>
<feature type="transmembrane region" description="Helical" evidence="2">
    <location>
        <begin position="132"/>
        <end position="152"/>
    </location>
</feature>
<feature type="topological domain" description="Cytoplasmic" evidence="2">
    <location>
        <begin position="153"/>
        <end position="161"/>
    </location>
</feature>
<feature type="transmembrane region" description="Helical" evidence="2">
    <location>
        <begin position="162"/>
        <end position="182"/>
    </location>
</feature>
<feature type="topological domain" description="Extracellular" evidence="2">
    <location>
        <begin position="183"/>
        <end position="211"/>
    </location>
</feature>
<feature type="transmembrane region" description="Helical" evidence="2">
    <location>
        <begin position="212"/>
        <end position="232"/>
    </location>
</feature>
<feature type="topological domain" description="Cytoplasmic" evidence="2">
    <location>
        <begin position="233"/>
        <end position="292"/>
    </location>
</feature>
<feature type="transmembrane region" description="Helical" evidence="2">
    <location>
        <begin position="293"/>
        <end position="313"/>
    </location>
</feature>
<feature type="topological domain" description="Extracellular" evidence="2">
    <location>
        <begin position="314"/>
        <end position="348"/>
    </location>
</feature>
<feature type="transmembrane region" description="Helical" evidence="2">
    <location>
        <begin position="349"/>
        <end position="369"/>
    </location>
</feature>
<feature type="topological domain" description="Cytoplasmic" evidence="2">
    <location>
        <begin position="370"/>
        <end position="371"/>
    </location>
</feature>
<feature type="transmembrane region" description="Helical" evidence="2">
    <location>
        <begin position="372"/>
        <end position="392"/>
    </location>
</feature>
<feature type="topological domain" description="Extracellular" evidence="2">
    <location>
        <begin position="393"/>
        <end position="402"/>
    </location>
</feature>
<feature type="transmembrane region" description="Helical" evidence="2">
    <location>
        <begin position="403"/>
        <end position="423"/>
    </location>
</feature>
<feature type="topological domain" description="Cytoplasmic" evidence="2">
    <location>
        <begin position="424"/>
        <end position="441"/>
    </location>
</feature>
<feature type="transmembrane region" description="Helical" evidence="2">
    <location>
        <begin position="442"/>
        <end position="462"/>
    </location>
</feature>
<feature type="topological domain" description="Extracellular" evidence="2">
    <location>
        <begin position="463"/>
        <end position="484"/>
    </location>
</feature>
<feature type="transmembrane region" description="Helical" evidence="2">
    <location>
        <begin position="485"/>
        <end position="505"/>
    </location>
</feature>
<feature type="topological domain" description="Cytoplasmic" evidence="2">
    <location>
        <begin position="506"/>
        <end position="524"/>
    </location>
</feature>
<feature type="sequence conflict" description="In Ref. 1; CAA68945." evidence="5" ref="1">
    <original>F</original>
    <variation>L</variation>
    <location>
        <position position="418"/>
    </location>
</feature>
<keyword id="KW-0472">Membrane</keyword>
<keyword id="KW-0592">Phosphate transport</keyword>
<keyword id="KW-1185">Reference proteome</keyword>
<keyword id="KW-0769">Symport</keyword>
<keyword id="KW-0812">Transmembrane</keyword>
<keyword id="KW-1133">Transmembrane helix</keyword>
<keyword id="KW-0813">Transport</keyword>
<name>PHT12_ARATH</name>
<comment type="function">
    <text evidence="1">High-affinity transporter for external inorganic phosphate.</text>
</comment>
<comment type="subcellular location">
    <subcellularLocation>
        <location evidence="1">Membrane</location>
        <topology evidence="1">Multi-pass membrane protein</topology>
    </subcellularLocation>
</comment>
<comment type="tissue specificity">
    <text evidence="3 4">Root specific, especially in trichoblasts. In mature plants, localized in root cortical cells and young lateral roots.</text>
</comment>
<comment type="induction">
    <text evidence="3 4">In roots by phosphate starvation.</text>
</comment>
<comment type="miscellaneous">
    <text>Although related to the sugar transporter family, it does not transport sugars.</text>
</comment>
<comment type="similarity">
    <text evidence="5">Belongs to the major facilitator superfamily. Phosphate:H(+) symporter (TC 2.A.1.9) family.</text>
</comment>
<evidence type="ECO:0000250" key="1"/>
<evidence type="ECO:0000255" key="2"/>
<evidence type="ECO:0000269" key="3">
    <source>
    </source>
</evidence>
<evidence type="ECO:0000269" key="4">
    <source>
    </source>
</evidence>
<evidence type="ECO:0000305" key="5"/>
<accession>Q96243</accession>
<accession>O48640</accession>
<gene>
    <name type="primary">PHT1-2</name>
    <name type="synonym">APT1</name>
    <name type="synonym">PHT2</name>
    <name type="ordered locus">At5g43370</name>
    <name type="ORF">MWF20.6</name>
</gene>
<proteinExistence type="evidence at transcript level"/>
<sequence length="524" mass="57644">MAEQQLGVLKALDVAKTQLYHFTAIVIAGMGFFTDAYDLFCVSLVTKLLGRIYYFNPESAKPGSLPPHVAAAVNGVALCGTLSGQLFFGWLGDKLGRKKVYGLTLIMMILCSVASGLSFGNEAKGVMTTLCFFRFWLGFGIGGDYPLSATIMSEYANKKTRGAFIAAVFAMQGVGILAGGFVALAVSSIFDKKFPAPTYAVNRALSTPPQVDYIWRIIVMFGALPAALTYYWRMKMPETARYTALVAKNIKQATADMSKVLQTDIELEERVEDDVKDPRQNYGLFSKEFLRRHGLHLLGTTSTWFLLDIAFYSQNLFQKDIFSAIGWIPKAATMNATHEVFRIARAQTLIALCSTVPGYWFTVAFIDTIGRFKIQLNGFFMMTVFMFAIAFPYNHWIKPENRIGFVVMYSLTFFFANFGPNATTFIVPAEIFPARLRSTCHGISAAAGKAGAIIGAFGFLYAAQNQDKAKVDAGYPPGIGVKNSLIVLGVLNFIGMLFTFLVPEPKGKSLEELSGEAEVSHDEK</sequence>
<reference key="1">
    <citation type="journal article" date="1997" name="Plant J.">
        <title>The cloning of two Arabidopsis genes belonging to a phosphate transporter family.</title>
        <authorList>
            <person name="Smith F.W."/>
            <person name="Ealing P.M."/>
            <person name="Dong B."/>
            <person name="Delhaize E."/>
        </authorList>
    </citation>
    <scope>NUCLEOTIDE SEQUENCE [GENOMIC DNA]</scope>
    <scope>TISSUE SPECIFICITY</scope>
    <scope>INDUCTION</scope>
    <source>
        <strain>cv. Columbia</strain>
        <tissue>Root</tissue>
    </source>
</reference>
<reference key="2">
    <citation type="journal article" date="1997" name="Soil Sci. Plant Nutr.">
        <title>High-affinity phosphate transporter genes of Arabidopsis thaliana.</title>
        <authorList>
            <person name="Mitsukawa N."/>
            <person name="Okumura S."/>
            <person name="Shibata D."/>
        </authorList>
    </citation>
    <scope>NUCLEOTIDE SEQUENCE [GENOMIC DNA]</scope>
    <source>
        <strain>cv. Columbia</strain>
    </source>
</reference>
<reference key="3">
    <citation type="journal article" date="2000" name="DNA Res.">
        <title>Structural analysis of Arabidopsis thaliana chromosome 5. X. Sequence features of the regions of 3,076,755 bp covered by sixty P1 and TAC clones.</title>
        <authorList>
            <person name="Sato S."/>
            <person name="Nakamura Y."/>
            <person name="Kaneko T."/>
            <person name="Katoh T."/>
            <person name="Asamizu E."/>
            <person name="Kotani H."/>
            <person name="Tabata S."/>
        </authorList>
    </citation>
    <scope>NUCLEOTIDE SEQUENCE [LARGE SCALE GENOMIC DNA]</scope>
    <source>
        <strain>cv. Columbia</strain>
    </source>
</reference>
<reference key="4">
    <citation type="journal article" date="2017" name="Plant J.">
        <title>Araport11: a complete reannotation of the Arabidopsis thaliana reference genome.</title>
        <authorList>
            <person name="Cheng C.Y."/>
            <person name="Krishnakumar V."/>
            <person name="Chan A.P."/>
            <person name="Thibaud-Nissen F."/>
            <person name="Schobel S."/>
            <person name="Town C.D."/>
        </authorList>
    </citation>
    <scope>GENOME REANNOTATION</scope>
    <source>
        <strain>cv. Columbia</strain>
    </source>
</reference>
<reference key="5">
    <citation type="journal article" date="2002" name="Plant J.">
        <title>Expression analysis suggests novel roles for members of the Pht1 family of phosphate transporters in Arabidopsis.</title>
        <authorList>
            <person name="Mudge S.R."/>
            <person name="Rae A.L."/>
            <person name="Diatloff E."/>
            <person name="Smith F.W."/>
        </authorList>
    </citation>
    <scope>INDUCTION</scope>
    <scope>TISSUE SPECIFICITY</scope>
    <scope>GENE FAMILY</scope>
    <scope>NOMENCLATURE</scope>
</reference>
<organism>
    <name type="scientific">Arabidopsis thaliana</name>
    <name type="common">Mouse-ear cress</name>
    <dbReference type="NCBI Taxonomy" id="3702"/>
    <lineage>
        <taxon>Eukaryota</taxon>
        <taxon>Viridiplantae</taxon>
        <taxon>Streptophyta</taxon>
        <taxon>Embryophyta</taxon>
        <taxon>Tracheophyta</taxon>
        <taxon>Spermatophyta</taxon>
        <taxon>Magnoliopsida</taxon>
        <taxon>eudicotyledons</taxon>
        <taxon>Gunneridae</taxon>
        <taxon>Pentapetalae</taxon>
        <taxon>rosids</taxon>
        <taxon>malvids</taxon>
        <taxon>Brassicales</taxon>
        <taxon>Brassicaceae</taxon>
        <taxon>Camelineae</taxon>
        <taxon>Arabidopsis</taxon>
    </lineage>
</organism>
<dbReference type="EMBL" id="Y07681">
    <property type="protein sequence ID" value="CAA68945.1"/>
    <property type="molecule type" value="Genomic_DNA"/>
</dbReference>
<dbReference type="EMBL" id="AB000094">
    <property type="protein sequence ID" value="BAA24282.1"/>
    <property type="molecule type" value="Genomic_DNA"/>
</dbReference>
<dbReference type="EMBL" id="AB025638">
    <property type="protein sequence ID" value="BAA97416.1"/>
    <property type="molecule type" value="Genomic_DNA"/>
</dbReference>
<dbReference type="EMBL" id="CP002688">
    <property type="protein sequence ID" value="AED94950.1"/>
    <property type="molecule type" value="Genomic_DNA"/>
</dbReference>
<dbReference type="EMBL" id="CP002688">
    <property type="protein sequence ID" value="AED94951.1"/>
    <property type="molecule type" value="Genomic_DNA"/>
</dbReference>
<dbReference type="RefSeq" id="NP_001190462.1">
    <property type="nucleotide sequence ID" value="NM_001203533.1"/>
</dbReference>
<dbReference type="RefSeq" id="NP_199151.1">
    <property type="nucleotide sequence ID" value="NM_123703.3"/>
</dbReference>
<dbReference type="SMR" id="Q96243"/>
<dbReference type="FunCoup" id="Q96243">
    <property type="interactions" value="550"/>
</dbReference>
<dbReference type="STRING" id="3702.Q96243"/>
<dbReference type="iPTMnet" id="Q96243"/>
<dbReference type="PaxDb" id="3702-AT5G43370.2"/>
<dbReference type="ProteomicsDB" id="234751"/>
<dbReference type="EnsemblPlants" id="AT5G43370.1">
    <property type="protein sequence ID" value="AT5G43370.1"/>
    <property type="gene ID" value="AT5G43370"/>
</dbReference>
<dbReference type="EnsemblPlants" id="AT5G43370.2">
    <property type="protein sequence ID" value="AT5G43370.2"/>
    <property type="gene ID" value="AT5G43370"/>
</dbReference>
<dbReference type="GeneID" id="834355"/>
<dbReference type="Gramene" id="AT5G43370.1">
    <property type="protein sequence ID" value="AT5G43370.1"/>
    <property type="gene ID" value="AT5G43370"/>
</dbReference>
<dbReference type="Gramene" id="AT5G43370.2">
    <property type="protein sequence ID" value="AT5G43370.2"/>
    <property type="gene ID" value="AT5G43370"/>
</dbReference>
<dbReference type="KEGG" id="ath:AT5G43370"/>
<dbReference type="Araport" id="AT5G43370"/>
<dbReference type="TAIR" id="AT5G43370">
    <property type="gene designation" value="PHT1"/>
</dbReference>
<dbReference type="eggNOG" id="KOG0252">
    <property type="taxonomic scope" value="Eukaryota"/>
</dbReference>
<dbReference type="HOGENOM" id="CLU_001265_46_14_1"/>
<dbReference type="InParanoid" id="Q96243"/>
<dbReference type="OMA" id="DDVKDPR"/>
<dbReference type="OrthoDB" id="2015989at2759"/>
<dbReference type="PhylomeDB" id="Q96243"/>
<dbReference type="CD-CODE" id="4299E36E">
    <property type="entry name" value="Nucleolus"/>
</dbReference>
<dbReference type="PRO" id="PR:Q96243"/>
<dbReference type="Proteomes" id="UP000006548">
    <property type="component" value="Chromosome 5"/>
</dbReference>
<dbReference type="ExpressionAtlas" id="Q96243">
    <property type="expression patterns" value="baseline and differential"/>
</dbReference>
<dbReference type="GO" id="GO:0009507">
    <property type="term" value="C:chloroplast"/>
    <property type="evidence" value="ECO:0000314"/>
    <property type="project" value="TAIR"/>
</dbReference>
<dbReference type="GO" id="GO:0016020">
    <property type="term" value="C:membrane"/>
    <property type="evidence" value="ECO:0007669"/>
    <property type="project" value="UniProtKB-SubCell"/>
</dbReference>
<dbReference type="GO" id="GO:0005315">
    <property type="term" value="F:phosphate transmembrane transporter activity"/>
    <property type="evidence" value="ECO:0000250"/>
    <property type="project" value="TAIR"/>
</dbReference>
<dbReference type="GO" id="GO:0015293">
    <property type="term" value="F:symporter activity"/>
    <property type="evidence" value="ECO:0007669"/>
    <property type="project" value="UniProtKB-KW"/>
</dbReference>
<dbReference type="GO" id="GO:0016036">
    <property type="term" value="P:cellular response to phosphate starvation"/>
    <property type="evidence" value="ECO:0000270"/>
    <property type="project" value="TAIR"/>
</dbReference>
<dbReference type="GO" id="GO:0006817">
    <property type="term" value="P:phosphate ion transport"/>
    <property type="evidence" value="ECO:0000304"/>
    <property type="project" value="TAIR"/>
</dbReference>
<dbReference type="CDD" id="cd17364">
    <property type="entry name" value="MFS_PhT"/>
    <property type="match status" value="1"/>
</dbReference>
<dbReference type="FunFam" id="1.20.1250.20:FF:000175">
    <property type="entry name" value="Inorganic phosphate transporter 1-6"/>
    <property type="match status" value="1"/>
</dbReference>
<dbReference type="Gene3D" id="1.20.1250.20">
    <property type="entry name" value="MFS general substrate transporter like domains"/>
    <property type="match status" value="2"/>
</dbReference>
<dbReference type="InterPro" id="IPR020846">
    <property type="entry name" value="MFS_dom"/>
</dbReference>
<dbReference type="InterPro" id="IPR005828">
    <property type="entry name" value="MFS_sugar_transport-like"/>
</dbReference>
<dbReference type="InterPro" id="IPR036259">
    <property type="entry name" value="MFS_trans_sf"/>
</dbReference>
<dbReference type="InterPro" id="IPR004738">
    <property type="entry name" value="Phos_permease"/>
</dbReference>
<dbReference type="NCBIfam" id="TIGR00887">
    <property type="entry name" value="2A0109"/>
    <property type="match status" value="1"/>
</dbReference>
<dbReference type="PANTHER" id="PTHR24064">
    <property type="entry name" value="SOLUTE CARRIER FAMILY 22 MEMBER"/>
    <property type="match status" value="1"/>
</dbReference>
<dbReference type="Pfam" id="PF00083">
    <property type="entry name" value="Sugar_tr"/>
    <property type="match status" value="1"/>
</dbReference>
<dbReference type="SUPFAM" id="SSF103473">
    <property type="entry name" value="MFS general substrate transporter"/>
    <property type="match status" value="1"/>
</dbReference>
<dbReference type="PROSITE" id="PS50850">
    <property type="entry name" value="MFS"/>
    <property type="match status" value="1"/>
</dbReference>
<protein>
    <recommendedName>
        <fullName>Probable inorganic phosphate transporter 1-2</fullName>
        <shortName>AtPht1;2</shortName>
    </recommendedName>
    <alternativeName>
        <fullName>H(+)/Pi cotransporter</fullName>
    </alternativeName>
</protein>